<reference key="1">
    <citation type="journal article" date="2004" name="Proc. Natl. Acad. Sci. U.S.A.">
        <title>Complete genomes of two clinical Staphylococcus aureus strains: evidence for the rapid evolution of virulence and drug resistance.</title>
        <authorList>
            <person name="Holden M.T.G."/>
            <person name="Feil E.J."/>
            <person name="Lindsay J.A."/>
            <person name="Peacock S.J."/>
            <person name="Day N.P.J."/>
            <person name="Enright M.C."/>
            <person name="Foster T.J."/>
            <person name="Moore C.E."/>
            <person name="Hurst L."/>
            <person name="Atkin R."/>
            <person name="Barron A."/>
            <person name="Bason N."/>
            <person name="Bentley S.D."/>
            <person name="Chillingworth C."/>
            <person name="Chillingworth T."/>
            <person name="Churcher C."/>
            <person name="Clark L."/>
            <person name="Corton C."/>
            <person name="Cronin A."/>
            <person name="Doggett J."/>
            <person name="Dowd L."/>
            <person name="Feltwell T."/>
            <person name="Hance Z."/>
            <person name="Harris B."/>
            <person name="Hauser H."/>
            <person name="Holroyd S."/>
            <person name="Jagels K."/>
            <person name="James K.D."/>
            <person name="Lennard N."/>
            <person name="Line A."/>
            <person name="Mayes R."/>
            <person name="Moule S."/>
            <person name="Mungall K."/>
            <person name="Ormond D."/>
            <person name="Quail M.A."/>
            <person name="Rabbinowitsch E."/>
            <person name="Rutherford K.M."/>
            <person name="Sanders M."/>
            <person name="Sharp S."/>
            <person name="Simmonds M."/>
            <person name="Stevens K."/>
            <person name="Whitehead S."/>
            <person name="Barrell B.G."/>
            <person name="Spratt B.G."/>
            <person name="Parkhill J."/>
        </authorList>
    </citation>
    <scope>NUCLEOTIDE SEQUENCE [LARGE SCALE GENOMIC DNA]</scope>
    <source>
        <strain>MRSA252</strain>
    </source>
</reference>
<name>TRPC_STAAR</name>
<keyword id="KW-0028">Amino-acid biosynthesis</keyword>
<keyword id="KW-0057">Aromatic amino acid biosynthesis</keyword>
<keyword id="KW-0210">Decarboxylase</keyword>
<keyword id="KW-0456">Lyase</keyword>
<keyword id="KW-0822">Tryptophan biosynthesis</keyword>
<evidence type="ECO:0000255" key="1">
    <source>
        <dbReference type="HAMAP-Rule" id="MF_00134"/>
    </source>
</evidence>
<proteinExistence type="inferred from homology"/>
<gene>
    <name evidence="1" type="primary">trpC</name>
    <name type="ordered locus">SAR1383</name>
</gene>
<organism>
    <name type="scientific">Staphylococcus aureus (strain MRSA252)</name>
    <dbReference type="NCBI Taxonomy" id="282458"/>
    <lineage>
        <taxon>Bacteria</taxon>
        <taxon>Bacillati</taxon>
        <taxon>Bacillota</taxon>
        <taxon>Bacilli</taxon>
        <taxon>Bacillales</taxon>
        <taxon>Staphylococcaceae</taxon>
        <taxon>Staphylococcus</taxon>
    </lineage>
</organism>
<sequence length="260" mass="29620">MTILEEIVEYKQLLLQNGYYQDKLNTLKSVNIQNKKSFINAIEKEPKLAIIAEIKSKSPTVNDLPERDLSQQISDYEQYGANAVSILTDEKYFGGSFERLQALTTKTTLPVLCKDFIIDPLQIDVAKQAGASMILLIVNILSDKQLKDLYNYAISQNLEVLVEVHDRHELERAYKVNAKLIGVNNRDLKRFVTNVEHTNTILENKKPNHYYISESGIHDVSDVRKILHSGIDGLLIGEALMRCDNLSEFLPQLKMQKVKS</sequence>
<protein>
    <recommendedName>
        <fullName evidence="1">Indole-3-glycerol phosphate synthase</fullName>
        <shortName evidence="1">IGPS</shortName>
        <ecNumber evidence="1">4.1.1.48</ecNumber>
    </recommendedName>
</protein>
<accession>Q6GH35</accession>
<comment type="catalytic activity">
    <reaction evidence="1">
        <text>1-(2-carboxyphenylamino)-1-deoxy-D-ribulose 5-phosphate + H(+) = (1S,2R)-1-C-(indol-3-yl)glycerol 3-phosphate + CO2 + H2O</text>
        <dbReference type="Rhea" id="RHEA:23476"/>
        <dbReference type="ChEBI" id="CHEBI:15377"/>
        <dbReference type="ChEBI" id="CHEBI:15378"/>
        <dbReference type="ChEBI" id="CHEBI:16526"/>
        <dbReference type="ChEBI" id="CHEBI:58613"/>
        <dbReference type="ChEBI" id="CHEBI:58866"/>
        <dbReference type="EC" id="4.1.1.48"/>
    </reaction>
</comment>
<comment type="pathway">
    <text evidence="1">Amino-acid biosynthesis; L-tryptophan biosynthesis; L-tryptophan from chorismate: step 4/5.</text>
</comment>
<comment type="similarity">
    <text evidence="1">Belongs to the TrpC family.</text>
</comment>
<feature type="chain" id="PRO_0000154252" description="Indole-3-glycerol phosphate synthase">
    <location>
        <begin position="1"/>
        <end position="260"/>
    </location>
</feature>
<dbReference type="EC" id="4.1.1.48" evidence="1"/>
<dbReference type="EMBL" id="BX571856">
    <property type="protein sequence ID" value="CAG40381.1"/>
    <property type="molecule type" value="Genomic_DNA"/>
</dbReference>
<dbReference type="RefSeq" id="WP_000153717.1">
    <property type="nucleotide sequence ID" value="NC_002952.2"/>
</dbReference>
<dbReference type="SMR" id="Q6GH35"/>
<dbReference type="KEGG" id="sar:SAR1383"/>
<dbReference type="HOGENOM" id="CLU_034247_2_1_9"/>
<dbReference type="UniPathway" id="UPA00035">
    <property type="reaction ID" value="UER00043"/>
</dbReference>
<dbReference type="Proteomes" id="UP000000596">
    <property type="component" value="Chromosome"/>
</dbReference>
<dbReference type="GO" id="GO:0004425">
    <property type="term" value="F:indole-3-glycerol-phosphate synthase activity"/>
    <property type="evidence" value="ECO:0007669"/>
    <property type="project" value="UniProtKB-UniRule"/>
</dbReference>
<dbReference type="GO" id="GO:0004640">
    <property type="term" value="F:phosphoribosylanthranilate isomerase activity"/>
    <property type="evidence" value="ECO:0007669"/>
    <property type="project" value="TreeGrafter"/>
</dbReference>
<dbReference type="GO" id="GO:0000162">
    <property type="term" value="P:L-tryptophan biosynthetic process"/>
    <property type="evidence" value="ECO:0007669"/>
    <property type="project" value="UniProtKB-UniRule"/>
</dbReference>
<dbReference type="CDD" id="cd00331">
    <property type="entry name" value="IGPS"/>
    <property type="match status" value="1"/>
</dbReference>
<dbReference type="FunFam" id="3.20.20.70:FF:000024">
    <property type="entry name" value="Indole-3-glycerol phosphate synthase"/>
    <property type="match status" value="1"/>
</dbReference>
<dbReference type="Gene3D" id="3.20.20.70">
    <property type="entry name" value="Aldolase class I"/>
    <property type="match status" value="1"/>
</dbReference>
<dbReference type="HAMAP" id="MF_00134_B">
    <property type="entry name" value="IGPS_B"/>
    <property type="match status" value="1"/>
</dbReference>
<dbReference type="InterPro" id="IPR013785">
    <property type="entry name" value="Aldolase_TIM"/>
</dbReference>
<dbReference type="InterPro" id="IPR045186">
    <property type="entry name" value="Indole-3-glycerol_P_synth"/>
</dbReference>
<dbReference type="InterPro" id="IPR013798">
    <property type="entry name" value="Indole-3-glycerol_P_synth_dom"/>
</dbReference>
<dbReference type="InterPro" id="IPR001468">
    <property type="entry name" value="Indole-3-GlycerolPSynthase_CS"/>
</dbReference>
<dbReference type="InterPro" id="IPR011060">
    <property type="entry name" value="RibuloseP-bd_barrel"/>
</dbReference>
<dbReference type="NCBIfam" id="NF001371">
    <property type="entry name" value="PRK00278.1-3"/>
    <property type="match status" value="1"/>
</dbReference>
<dbReference type="PANTHER" id="PTHR22854:SF2">
    <property type="entry name" value="INDOLE-3-GLYCEROL-PHOSPHATE SYNTHASE"/>
    <property type="match status" value="1"/>
</dbReference>
<dbReference type="PANTHER" id="PTHR22854">
    <property type="entry name" value="TRYPTOPHAN BIOSYNTHESIS PROTEIN"/>
    <property type="match status" value="1"/>
</dbReference>
<dbReference type="Pfam" id="PF00218">
    <property type="entry name" value="IGPS"/>
    <property type="match status" value="1"/>
</dbReference>
<dbReference type="SUPFAM" id="SSF51366">
    <property type="entry name" value="Ribulose-phoshate binding barrel"/>
    <property type="match status" value="1"/>
</dbReference>
<dbReference type="PROSITE" id="PS00614">
    <property type="entry name" value="IGPS"/>
    <property type="match status" value="1"/>
</dbReference>